<evidence type="ECO:0000250" key="1"/>
<evidence type="ECO:0000255" key="2"/>
<evidence type="ECO:0000305" key="3"/>
<dbReference type="EC" id="7.1.1.2"/>
<dbReference type="EMBL" id="X73921">
    <property type="protein sequence ID" value="CAA52126.1"/>
    <property type="molecule type" value="Genomic_DNA"/>
</dbReference>
<dbReference type="PIR" id="S44402">
    <property type="entry name" value="S44402"/>
</dbReference>
<dbReference type="SMR" id="P43205"/>
<dbReference type="GO" id="GO:0031966">
    <property type="term" value="C:mitochondrial membrane"/>
    <property type="evidence" value="ECO:0007669"/>
    <property type="project" value="UniProtKB-SubCell"/>
</dbReference>
<dbReference type="GO" id="GO:0008137">
    <property type="term" value="F:NADH dehydrogenase (ubiquinone) activity"/>
    <property type="evidence" value="ECO:0007669"/>
    <property type="project" value="UniProtKB-EC"/>
</dbReference>
<dbReference type="Gene3D" id="1.20.120.1200">
    <property type="entry name" value="NADH-ubiquinone/plastoquinone oxidoreductase chain 6, subunit NuoJ"/>
    <property type="match status" value="1"/>
</dbReference>
<dbReference type="InterPro" id="IPR050269">
    <property type="entry name" value="ComplexI_Subunit6"/>
</dbReference>
<dbReference type="InterPro" id="IPR001457">
    <property type="entry name" value="NADH_UbQ/plastoQ_OxRdtase_su6"/>
</dbReference>
<dbReference type="InterPro" id="IPR042106">
    <property type="entry name" value="Nuo/plastoQ_OxRdtase_6_NuoJ"/>
</dbReference>
<dbReference type="PANTHER" id="PTHR11435">
    <property type="entry name" value="NADH UBIQUINONE OXIDOREDUCTASE SUBUNIT ND6"/>
    <property type="match status" value="1"/>
</dbReference>
<dbReference type="PANTHER" id="PTHR11435:SF1">
    <property type="entry name" value="NADH-UBIQUINONE OXIDOREDUCTASE CHAIN 6"/>
    <property type="match status" value="1"/>
</dbReference>
<dbReference type="Pfam" id="PF00499">
    <property type="entry name" value="Oxidored_q3"/>
    <property type="match status" value="1"/>
</dbReference>
<comment type="function">
    <text evidence="1">Core subunit of the mitochondrial membrane respiratory chain NADH dehydrogenase (Complex I) that is believed to belong to the minimal assembly required for catalysis. Complex I functions in the transfer of electrons from NADH to the respiratory chain. The immediate electron acceptor for the enzyme is believed to be ubiquinone (By similarity).</text>
</comment>
<comment type="catalytic activity">
    <reaction>
        <text>a ubiquinone + NADH + 5 H(+)(in) = a ubiquinol + NAD(+) + 4 H(+)(out)</text>
        <dbReference type="Rhea" id="RHEA:29091"/>
        <dbReference type="Rhea" id="RHEA-COMP:9565"/>
        <dbReference type="Rhea" id="RHEA-COMP:9566"/>
        <dbReference type="ChEBI" id="CHEBI:15378"/>
        <dbReference type="ChEBI" id="CHEBI:16389"/>
        <dbReference type="ChEBI" id="CHEBI:17976"/>
        <dbReference type="ChEBI" id="CHEBI:57540"/>
        <dbReference type="ChEBI" id="CHEBI:57945"/>
        <dbReference type="EC" id="7.1.1.2"/>
    </reaction>
</comment>
<comment type="subcellular location">
    <subcellularLocation>
        <location evidence="3">Mitochondrion membrane</location>
        <topology evidence="3">Multi-pass membrane protein</topology>
    </subcellularLocation>
</comment>
<comment type="similarity">
    <text evidence="3">Belongs to the complex I subunit 6 family.</text>
</comment>
<organism>
    <name type="scientific">Synthliboramphus hypoleucus</name>
    <name type="common">Guadalupe murrelet</name>
    <dbReference type="NCBI Taxonomy" id="28709"/>
    <lineage>
        <taxon>Eukaryota</taxon>
        <taxon>Metazoa</taxon>
        <taxon>Chordata</taxon>
        <taxon>Craniata</taxon>
        <taxon>Vertebrata</taxon>
        <taxon>Euteleostomi</taxon>
        <taxon>Archelosauria</taxon>
        <taxon>Archosauria</taxon>
        <taxon>Dinosauria</taxon>
        <taxon>Saurischia</taxon>
        <taxon>Theropoda</taxon>
        <taxon>Coelurosauria</taxon>
        <taxon>Aves</taxon>
        <taxon>Neognathae</taxon>
        <taxon>Neoaves</taxon>
        <taxon>Charadriiformes</taxon>
        <taxon>Alcidae</taxon>
        <taxon>Synthliboramphus</taxon>
    </lineage>
</organism>
<gene>
    <name type="primary">MT-ND6</name>
    <name type="synonym">MTND6</name>
    <name type="synonym">NADH6</name>
    <name type="synonym">ND6</name>
</gene>
<sequence>MTYFMLFLGLCFVLGGLGVASNPSPYYGVVGLVLASVVGCGWLLSLGVSFVSLVLFMVYLGGMLVVFVYSVSLAADPFPEAWGDWRVVGYGVSFIAVLVVGVVIGGLVECWDLGVITVDSVGMFSVRLDFSGVAMFYSCGVGMFLVAGWGLLLTLFVVLELVRGLSCGAIRAV</sequence>
<geneLocation type="mitochondrion"/>
<name>NU6M_SYNHY</name>
<accession>P43205</accession>
<reference key="1">
    <citation type="journal article" date="1994" name="Curr. Genet.">
        <title>Intragenic rearrangements in the mitochondrial NADH dehydrogenase subunit 6 gene of vertebrates.</title>
        <authorList>
            <person name="Moum T."/>
            <person name="Willassen N.P."/>
            <person name="Johansen S."/>
        </authorList>
    </citation>
    <scope>NUCLEOTIDE SEQUENCE [GENOMIC DNA]</scope>
</reference>
<protein>
    <recommendedName>
        <fullName>NADH-ubiquinone oxidoreductase chain 6</fullName>
        <ecNumber>7.1.1.2</ecNumber>
    </recommendedName>
    <alternativeName>
        <fullName>NADH dehydrogenase subunit 6</fullName>
    </alternativeName>
</protein>
<proteinExistence type="inferred from homology"/>
<feature type="chain" id="PRO_0000118339" description="NADH-ubiquinone oxidoreductase chain 6">
    <location>
        <begin position="1"/>
        <end position="173"/>
    </location>
</feature>
<feature type="transmembrane region" description="Helical" evidence="2">
    <location>
        <begin position="1"/>
        <end position="21"/>
    </location>
</feature>
<feature type="transmembrane region" description="Helical" evidence="2">
    <location>
        <begin position="27"/>
        <end position="47"/>
    </location>
</feature>
<feature type="transmembrane region" description="Helical" evidence="2">
    <location>
        <begin position="48"/>
        <end position="68"/>
    </location>
</feature>
<feature type="transmembrane region" description="Helical" evidence="2">
    <location>
        <begin position="87"/>
        <end position="107"/>
    </location>
</feature>
<feature type="transmembrane region" description="Helical" evidence="2">
    <location>
        <begin position="139"/>
        <end position="159"/>
    </location>
</feature>
<keyword id="KW-0249">Electron transport</keyword>
<keyword id="KW-0472">Membrane</keyword>
<keyword id="KW-0496">Mitochondrion</keyword>
<keyword id="KW-0520">NAD</keyword>
<keyword id="KW-0679">Respiratory chain</keyword>
<keyword id="KW-1278">Translocase</keyword>
<keyword id="KW-0812">Transmembrane</keyword>
<keyword id="KW-1133">Transmembrane helix</keyword>
<keyword id="KW-0813">Transport</keyword>
<keyword id="KW-0830">Ubiquinone</keyword>